<dbReference type="EMBL" id="U14648">
    <property type="protein sequence ID" value="AAA64595.1"/>
    <property type="status" value="ALT_FRAME"/>
    <property type="molecule type" value="mRNA"/>
</dbReference>
<dbReference type="EMBL" id="AF077858">
    <property type="protein sequence ID" value="AAC71000.1"/>
    <property type="molecule type" value="mRNA"/>
</dbReference>
<dbReference type="EMBL" id="AK086103">
    <property type="protein sequence ID" value="BAC39610.1"/>
    <property type="molecule type" value="mRNA"/>
</dbReference>
<dbReference type="EMBL" id="AK088042">
    <property type="protein sequence ID" value="BAC40111.1"/>
    <property type="molecule type" value="mRNA"/>
</dbReference>
<dbReference type="EMBL" id="AK165670">
    <property type="protein sequence ID" value="BAE38330.1"/>
    <property type="molecule type" value="mRNA"/>
</dbReference>
<dbReference type="EMBL" id="BC005493">
    <property type="protein sequence ID" value="AAH05493.1"/>
    <property type="molecule type" value="mRNA"/>
</dbReference>
<dbReference type="EMBL" id="X98511">
    <property type="protein sequence ID" value="CAA67134.1"/>
    <property type="molecule type" value="Genomic_DNA"/>
</dbReference>
<dbReference type="CCDS" id="CCDS25680.1"/>
<dbReference type="PIR" id="A55335">
    <property type="entry name" value="A55335"/>
</dbReference>
<dbReference type="RefSeq" id="NP_035488.1">
    <property type="nucleotide sequence ID" value="NM_011358.2"/>
</dbReference>
<dbReference type="RefSeq" id="XP_011247137.1">
    <property type="nucleotide sequence ID" value="XM_011248835.4"/>
</dbReference>
<dbReference type="RefSeq" id="XP_030101584.1">
    <property type="nucleotide sequence ID" value="XM_030245724.2"/>
</dbReference>
<dbReference type="SMR" id="Q62093"/>
<dbReference type="BioGRID" id="203188">
    <property type="interactions" value="41"/>
</dbReference>
<dbReference type="DIP" id="DIP-44831N"/>
<dbReference type="FunCoup" id="Q62093">
    <property type="interactions" value="5437"/>
</dbReference>
<dbReference type="IntAct" id="Q62093">
    <property type="interactions" value="10"/>
</dbReference>
<dbReference type="MINT" id="Q62093"/>
<dbReference type="STRING" id="10090.ENSMUSP00000090059"/>
<dbReference type="GlyGen" id="Q62093">
    <property type="glycosylation" value="1 site, 1 N-linked glycan (1 site)"/>
</dbReference>
<dbReference type="iPTMnet" id="Q62093"/>
<dbReference type="PhosphoSitePlus" id="Q62093"/>
<dbReference type="SwissPalm" id="Q62093"/>
<dbReference type="jPOST" id="Q62093"/>
<dbReference type="PaxDb" id="10090-ENSMUSP00000090059"/>
<dbReference type="PeptideAtlas" id="Q62093"/>
<dbReference type="ProteomicsDB" id="257413"/>
<dbReference type="Pumba" id="Q62093"/>
<dbReference type="DNASU" id="20382"/>
<dbReference type="Ensembl" id="ENSMUST00000092404.13">
    <property type="protein sequence ID" value="ENSMUSP00000090059.7"/>
    <property type="gene ID" value="ENSMUSG00000034120.19"/>
</dbReference>
<dbReference type="Ensembl" id="ENSMUST00000136914.8">
    <property type="protein sequence ID" value="ENSMUSP00000120086.2"/>
    <property type="gene ID" value="ENSMUSG00000034120.19"/>
</dbReference>
<dbReference type="Ensembl" id="ENSMUST00000190993.7">
    <property type="protein sequence ID" value="ENSMUSP00000140016.2"/>
    <property type="gene ID" value="ENSMUSG00000034120.19"/>
</dbReference>
<dbReference type="GeneID" id="20382"/>
<dbReference type="KEGG" id="mmu:20382"/>
<dbReference type="UCSC" id="uc007mmn.2">
    <property type="organism name" value="mouse"/>
</dbReference>
<dbReference type="AGR" id="MGI:98284"/>
<dbReference type="CTD" id="6427"/>
<dbReference type="MGI" id="MGI:98284">
    <property type="gene designation" value="Srsf2"/>
</dbReference>
<dbReference type="VEuPathDB" id="HostDB:ENSMUSG00000034120"/>
<dbReference type="eggNOG" id="KOG4207">
    <property type="taxonomic scope" value="Eukaryota"/>
</dbReference>
<dbReference type="GeneTree" id="ENSGT00940000154883"/>
<dbReference type="HOGENOM" id="CLU_012062_10_3_1"/>
<dbReference type="InParanoid" id="Q62093"/>
<dbReference type="OMA" id="PLIRCDV"/>
<dbReference type="OrthoDB" id="8093034at2759"/>
<dbReference type="PhylomeDB" id="Q62093"/>
<dbReference type="TreeFam" id="TF106262"/>
<dbReference type="Reactome" id="R-MMU-159236">
    <property type="pathway name" value="Transport of Mature mRNA derived from an Intron-Containing Transcript"/>
</dbReference>
<dbReference type="Reactome" id="R-MMU-72163">
    <property type="pathway name" value="mRNA Splicing - Major Pathway"/>
</dbReference>
<dbReference type="Reactome" id="R-MMU-72165">
    <property type="pathway name" value="mRNA Splicing - Minor Pathway"/>
</dbReference>
<dbReference type="Reactome" id="R-MMU-72187">
    <property type="pathway name" value="mRNA 3'-end processing"/>
</dbReference>
<dbReference type="Reactome" id="R-MMU-72203">
    <property type="pathway name" value="Processing of Capped Intron-Containing Pre-mRNA"/>
</dbReference>
<dbReference type="Reactome" id="R-MMU-73856">
    <property type="pathway name" value="RNA Polymerase II Transcription Termination"/>
</dbReference>
<dbReference type="BioGRID-ORCS" id="20382">
    <property type="hits" value="25 hits in 80 CRISPR screens"/>
</dbReference>
<dbReference type="ChiTaRS" id="Srsf2">
    <property type="organism name" value="mouse"/>
</dbReference>
<dbReference type="PRO" id="PR:Q62093"/>
<dbReference type="Proteomes" id="UP000000589">
    <property type="component" value="Chromosome 11"/>
</dbReference>
<dbReference type="RNAct" id="Q62093">
    <property type="molecule type" value="protein"/>
</dbReference>
<dbReference type="Bgee" id="ENSMUSG00000034120">
    <property type="expression patterns" value="Expressed in dorsal pancreas and 260 other cell types or tissues"/>
</dbReference>
<dbReference type="ExpressionAtlas" id="Q62093">
    <property type="expression patterns" value="baseline and differential"/>
</dbReference>
<dbReference type="GO" id="GO:0035061">
    <property type="term" value="C:interchromatin granule"/>
    <property type="evidence" value="ECO:0007669"/>
    <property type="project" value="Ensembl"/>
</dbReference>
<dbReference type="GO" id="GO:0016607">
    <property type="term" value="C:nuclear speck"/>
    <property type="evidence" value="ECO:0000314"/>
    <property type="project" value="MGI"/>
</dbReference>
<dbReference type="GO" id="GO:0005634">
    <property type="term" value="C:nucleus"/>
    <property type="evidence" value="ECO:0000314"/>
    <property type="project" value="MGI"/>
</dbReference>
<dbReference type="GO" id="GO:0005726">
    <property type="term" value="C:perichromatin fibrils"/>
    <property type="evidence" value="ECO:0007669"/>
    <property type="project" value="Ensembl"/>
</dbReference>
<dbReference type="GO" id="GO:0005681">
    <property type="term" value="C:spliceosomal complex"/>
    <property type="evidence" value="ECO:0000314"/>
    <property type="project" value="MGI"/>
</dbReference>
<dbReference type="GO" id="GO:0036002">
    <property type="term" value="F:pre-mRNA binding"/>
    <property type="evidence" value="ECO:0000314"/>
    <property type="project" value="MGI"/>
</dbReference>
<dbReference type="GO" id="GO:0005080">
    <property type="term" value="F:protein kinase C binding"/>
    <property type="evidence" value="ECO:0007669"/>
    <property type="project" value="Ensembl"/>
</dbReference>
<dbReference type="GO" id="GO:0006397">
    <property type="term" value="P:mRNA processing"/>
    <property type="evidence" value="ECO:0007669"/>
    <property type="project" value="UniProtKB-KW"/>
</dbReference>
<dbReference type="GO" id="GO:0000381">
    <property type="term" value="P:regulation of alternative mRNA splicing, via spliceosome"/>
    <property type="evidence" value="ECO:0000314"/>
    <property type="project" value="MGI"/>
</dbReference>
<dbReference type="GO" id="GO:0033197">
    <property type="term" value="P:response to vitamin E"/>
    <property type="evidence" value="ECO:0007669"/>
    <property type="project" value="Ensembl"/>
</dbReference>
<dbReference type="GO" id="GO:0008380">
    <property type="term" value="P:RNA splicing"/>
    <property type="evidence" value="ECO:0007669"/>
    <property type="project" value="UniProtKB-KW"/>
</dbReference>
<dbReference type="CDD" id="cd12311">
    <property type="entry name" value="RRM_SRSF2_SRSF8"/>
    <property type="match status" value="1"/>
</dbReference>
<dbReference type="FunFam" id="3.30.70.330:FF:000308">
    <property type="entry name" value="Serine/arginine-rich splicing factor 2"/>
    <property type="match status" value="1"/>
</dbReference>
<dbReference type="Gene3D" id="3.30.70.330">
    <property type="match status" value="1"/>
</dbReference>
<dbReference type="InterPro" id="IPR012677">
    <property type="entry name" value="Nucleotide-bd_a/b_plait_sf"/>
</dbReference>
<dbReference type="InterPro" id="IPR035979">
    <property type="entry name" value="RBD_domain_sf"/>
</dbReference>
<dbReference type="InterPro" id="IPR051106">
    <property type="entry name" value="RNA-bind/splicing_reg"/>
</dbReference>
<dbReference type="InterPro" id="IPR000504">
    <property type="entry name" value="RRM_dom"/>
</dbReference>
<dbReference type="InterPro" id="IPR003954">
    <property type="entry name" value="RRM_dom_euk"/>
</dbReference>
<dbReference type="PANTHER" id="PTHR48028">
    <property type="entry name" value="GLYCINE-RICH RNA-BINDING PROTEIN RZ1A"/>
    <property type="match status" value="1"/>
</dbReference>
<dbReference type="PANTHER" id="PTHR48028:SF4">
    <property type="entry name" value="SC35-LIKE SPLICING FACTOR"/>
    <property type="match status" value="1"/>
</dbReference>
<dbReference type="Pfam" id="PF00076">
    <property type="entry name" value="RRM_1"/>
    <property type="match status" value="1"/>
</dbReference>
<dbReference type="SMART" id="SM00360">
    <property type="entry name" value="RRM"/>
    <property type="match status" value="1"/>
</dbReference>
<dbReference type="SMART" id="SM00361">
    <property type="entry name" value="RRM_1"/>
    <property type="match status" value="1"/>
</dbReference>
<dbReference type="SUPFAM" id="SSF54928">
    <property type="entry name" value="RNA-binding domain, RBD"/>
    <property type="match status" value="1"/>
</dbReference>
<dbReference type="PROSITE" id="PS50102">
    <property type="entry name" value="RRM"/>
    <property type="match status" value="1"/>
</dbReference>
<sequence>MSYGRPPPDVEGMTSLKVDNLTYRTSPDTLRRVFEKYGRVGDVYIPRDRYTKESRGFAFVRFHDKRDAEDAMDAMDGAVLDGRELRVQMARYGRPPDSHHSRRGPPPRRYGGGGYGRRSRSPRRRRRSRSRSRSRSRSRSRSRYSRSKSRSRTRSRSRSTSKSRSARRSKSKSSSVSRSRSRSRSRSRSRSPPPVSKRESKSRSRSKSPPKSPEEEGAVSS</sequence>
<feature type="initiator methionine" description="Removed" evidence="2">
    <location>
        <position position="1"/>
    </location>
</feature>
<feature type="chain" id="PRO_0000081919" description="Serine/arginine-rich splicing factor 2">
    <location>
        <begin position="2"/>
        <end position="221"/>
    </location>
</feature>
<feature type="domain" description="RRM" evidence="3">
    <location>
        <begin position="14"/>
        <end position="92"/>
    </location>
</feature>
<feature type="region of interest" description="Disordered" evidence="4">
    <location>
        <begin position="92"/>
        <end position="221"/>
    </location>
</feature>
<feature type="compositionally biased region" description="Basic residues" evidence="4">
    <location>
        <begin position="117"/>
        <end position="171"/>
    </location>
</feature>
<feature type="compositionally biased region" description="Basic residues" evidence="4">
    <location>
        <begin position="179"/>
        <end position="189"/>
    </location>
</feature>
<feature type="modified residue" description="N-acetylserine" evidence="2">
    <location>
        <position position="2"/>
    </location>
</feature>
<feature type="modified residue" description="Phosphoserine" evidence="2">
    <location>
        <position position="2"/>
    </location>
</feature>
<feature type="modified residue" description="Phosphothreonine" evidence="2">
    <location>
        <position position="22"/>
    </location>
</feature>
<feature type="modified residue" description="Phosphothreonine" evidence="2">
    <location>
        <position position="25"/>
    </location>
</feature>
<feature type="modified residue" description="Phosphoserine" evidence="8">
    <location>
        <position position="26"/>
    </location>
</feature>
<feature type="modified residue" description="N6-acetyllysine" evidence="2">
    <location>
        <position position="52"/>
    </location>
</feature>
<feature type="modified residue" description="Phosphoserine" evidence="2">
    <location>
        <position position="189"/>
    </location>
</feature>
<feature type="modified residue" description="Phosphoserine" evidence="2">
    <location>
        <position position="191"/>
    </location>
</feature>
<feature type="modified residue" description="Phosphoserine" evidence="2">
    <location>
        <position position="204"/>
    </location>
</feature>
<feature type="modified residue" description="Phosphoserine" evidence="8">
    <location>
        <position position="206"/>
    </location>
</feature>
<feature type="modified residue" description="Phosphoserine" evidence="8">
    <location>
        <position position="208"/>
    </location>
</feature>
<feature type="modified residue" description="Phosphoserine" evidence="8">
    <location>
        <position position="212"/>
    </location>
</feature>
<feature type="modified residue" description="Phosphoserine" evidence="2">
    <location>
        <position position="220"/>
    </location>
</feature>
<feature type="sequence conflict" description="In Ref. 1; AAA64595." evidence="7" ref="1">
    <original>RD</original>
    <variation>PH</variation>
    <location>
        <begin position="66"/>
        <end position="67"/>
    </location>
</feature>
<feature type="sequence conflict" description="In Ref. 1; AAA64595." evidence="7" ref="1">
    <original>M</original>
    <variation>L</variation>
    <location>
        <position position="89"/>
    </location>
</feature>
<feature type="sequence conflict" description="In Ref. 1." evidence="7" ref="1">
    <location>
        <position position="120"/>
    </location>
</feature>
<feature type="sequence conflict" description="In Ref. 1; AAA64595." evidence="7" ref="1">
    <original>A</original>
    <variation>E</variation>
    <location>
        <position position="218"/>
    </location>
</feature>
<comment type="function">
    <text evidence="1 6">Necessary for the splicing of pre-mRNA. It is required for formation of the earliest ATP-dependent splicing complex and interacts with spliceosomal components bound to both the 5'- and 3'-splice sites during spliceosome assembly. It also is required for ATP-dependent interactions of both U1 and U2 snRNPs with pre-mRNA (By similarity). Can bind to the myelin basic protein (MBP) gene MB3 regulatory region and increase transcription of the mbp promoter in cells derived from the CNS. The phosphorylated form (by SRPK2) is required for cellular apoptosis in response to cisplatin treatment (By similarity).</text>
</comment>
<comment type="subunit">
    <text evidence="1 5">Interacts with CCNL1 and CCNL2. Interacts with SCAF11. Interacts with ZRSR2/U2AF1-RS2. Interacts with CCDC55 (via C-terminus) (By similarity). In vitro, self-associates and binds SRSF1/SFRS1 (ASF/SF2), SNRNP70 and U2AF1 but not U2AF2. Binds SREK1/SFRS12. Interacts with BRDT.</text>
</comment>
<comment type="interaction">
    <interactant intactId="EBI-2550402">
        <id>Q62093</id>
    </interactant>
    <interactant intactId="EBI-2654963">
        <id>Q99J95</id>
        <label>Cdk9</label>
    </interactant>
    <organismsDiffer>false</organismsDiffer>
    <experiments>3</experiments>
</comment>
<comment type="interaction">
    <interactant intactId="EBI-2550402">
        <id>Q62093</id>
    </interactant>
    <interactant intactId="EBI-6261031">
        <id>Q8R409</id>
        <label>Hexim1</label>
    </interactant>
    <organismsDiffer>false</organismsDiffer>
    <experiments>4</experiments>
</comment>
<comment type="interaction">
    <interactant intactId="EBI-2550402">
        <id>Q62093</id>
    </interactant>
    <interactant intactId="EBI-2549849">
        <id>P08775</id>
        <label>Polr2a</label>
    </interactant>
    <organismsDiffer>false</organismsDiffer>
    <experiments>3</experiments>
</comment>
<comment type="subcellular location">
    <subcellularLocation>
        <location evidence="1">Nucleus</location>
    </subcellularLocation>
    <subcellularLocation>
        <location evidence="1">Nucleus</location>
        <location evidence="1">Nucleoplasm</location>
    </subcellularLocation>
    <subcellularLocation>
        <location evidence="1">Nucleus speckle</location>
    </subcellularLocation>
    <text evidence="1">Phosphorylation by SRPK2 provokes its redistribution from the nuclear speckle to nucleoplasm.</text>
</comment>
<comment type="tissue specificity">
    <text evidence="6">Expressed in all the tissues examined; liver, kidney, spleen, heart, lung and brain.</text>
</comment>
<comment type="PTM">
    <text evidence="1">Extensively phosphorylated on serine residues in the RS domain. Phosphorylated by SRPK2 and this causes its redistribution from the nuclear speckle to nucleoplasm and controls cell fate decision in response to cisplatin treatment. KAT5/TIP60 inhibits its phosphorylation by preventing SRPK2 nuclear translocation (By similarity).</text>
</comment>
<comment type="PTM">
    <text evidence="1">Acetylation on Lys-52 by KAT5/TIP60 promotes its proteasomal degradation. This effect is counterbalanced by HDAC6, which positively controls SRSF2 protein level by deacetylating it and preventing its proteasomal degradation (By similarity).</text>
</comment>
<comment type="similarity">
    <text evidence="7">Belongs to the splicing factor SR family.</text>
</comment>
<comment type="sequence caution" evidence="7">
    <conflict type="frameshift">
        <sequence resource="EMBL-CDS" id="AAA64595"/>
    </conflict>
</comment>
<proteinExistence type="evidence at protein level"/>
<accession>Q62093</accession>
<accession>Q542L3</accession>
<accession>Q60701</accession>
<evidence type="ECO:0000250" key="1"/>
<evidence type="ECO:0000250" key="2">
    <source>
        <dbReference type="UniProtKB" id="Q01130"/>
    </source>
</evidence>
<evidence type="ECO:0000255" key="3">
    <source>
        <dbReference type="PROSITE-ProRule" id="PRU00176"/>
    </source>
</evidence>
<evidence type="ECO:0000256" key="4">
    <source>
        <dbReference type="SAM" id="MobiDB-lite"/>
    </source>
</evidence>
<evidence type="ECO:0000269" key="5">
    <source>
    </source>
</evidence>
<evidence type="ECO:0000269" key="6">
    <source>
    </source>
</evidence>
<evidence type="ECO:0000305" key="7"/>
<evidence type="ECO:0007744" key="8">
    <source>
    </source>
</evidence>
<keyword id="KW-0007">Acetylation</keyword>
<keyword id="KW-0507">mRNA processing</keyword>
<keyword id="KW-0508">mRNA splicing</keyword>
<keyword id="KW-0539">Nucleus</keyword>
<keyword id="KW-0597">Phosphoprotein</keyword>
<keyword id="KW-1185">Reference proteome</keyword>
<keyword id="KW-0694">RNA-binding</keyword>
<name>SRSF2_MOUSE</name>
<organism>
    <name type="scientific">Mus musculus</name>
    <name type="common">Mouse</name>
    <dbReference type="NCBI Taxonomy" id="10090"/>
    <lineage>
        <taxon>Eukaryota</taxon>
        <taxon>Metazoa</taxon>
        <taxon>Chordata</taxon>
        <taxon>Craniata</taxon>
        <taxon>Vertebrata</taxon>
        <taxon>Euteleostomi</taxon>
        <taxon>Mammalia</taxon>
        <taxon>Eutheria</taxon>
        <taxon>Euarchontoglires</taxon>
        <taxon>Glires</taxon>
        <taxon>Rodentia</taxon>
        <taxon>Myomorpha</taxon>
        <taxon>Muroidea</taxon>
        <taxon>Muridae</taxon>
        <taxon>Murinae</taxon>
        <taxon>Mus</taxon>
        <taxon>Mus</taxon>
    </lineage>
</organism>
<reference key="1">
    <citation type="journal article" date="1994" name="J. Biol. Chem.">
        <title>Isolation and characterization of MRF-1, a brain-derived DNA-binding protein with a capacity to regulate expression of myelin basic protein gene.</title>
        <authorList>
            <person name="Haque N.S."/>
            <person name="Buchberg A.M."/>
            <person name="Khalili K."/>
        </authorList>
    </citation>
    <scope>NUCLEOTIDE SEQUENCE [MRNA]</scope>
    <scope>FUNCTION IN MBP REGULATION</scope>
    <scope>TISSUE SPECIFICITY</scope>
    <source>
        <tissue>Brain</tissue>
    </source>
</reference>
<reference key="2">
    <citation type="journal article" date="1998" name="J. Biol. Chem.">
        <title>Oncoprotein TLS interacts with serine-arginine proteins involved in RNA splicing.</title>
        <authorList>
            <person name="Yang L."/>
            <person name="Embree L.J."/>
            <person name="Tsai S."/>
            <person name="Hickstein D.D."/>
        </authorList>
    </citation>
    <scope>NUCLEOTIDE SEQUENCE [MRNA]</scope>
</reference>
<reference key="3">
    <citation type="journal article" date="2005" name="Science">
        <title>The transcriptional landscape of the mammalian genome.</title>
        <authorList>
            <person name="Carninci P."/>
            <person name="Kasukawa T."/>
            <person name="Katayama S."/>
            <person name="Gough J."/>
            <person name="Frith M.C."/>
            <person name="Maeda N."/>
            <person name="Oyama R."/>
            <person name="Ravasi T."/>
            <person name="Lenhard B."/>
            <person name="Wells C."/>
            <person name="Kodzius R."/>
            <person name="Shimokawa K."/>
            <person name="Bajic V.B."/>
            <person name="Brenner S.E."/>
            <person name="Batalov S."/>
            <person name="Forrest A.R."/>
            <person name="Zavolan M."/>
            <person name="Davis M.J."/>
            <person name="Wilming L.G."/>
            <person name="Aidinis V."/>
            <person name="Allen J.E."/>
            <person name="Ambesi-Impiombato A."/>
            <person name="Apweiler R."/>
            <person name="Aturaliya R.N."/>
            <person name="Bailey T.L."/>
            <person name="Bansal M."/>
            <person name="Baxter L."/>
            <person name="Beisel K.W."/>
            <person name="Bersano T."/>
            <person name="Bono H."/>
            <person name="Chalk A.M."/>
            <person name="Chiu K.P."/>
            <person name="Choudhary V."/>
            <person name="Christoffels A."/>
            <person name="Clutterbuck D.R."/>
            <person name="Crowe M.L."/>
            <person name="Dalla E."/>
            <person name="Dalrymple B.P."/>
            <person name="de Bono B."/>
            <person name="Della Gatta G."/>
            <person name="di Bernardo D."/>
            <person name="Down T."/>
            <person name="Engstrom P."/>
            <person name="Fagiolini M."/>
            <person name="Faulkner G."/>
            <person name="Fletcher C.F."/>
            <person name="Fukushima T."/>
            <person name="Furuno M."/>
            <person name="Futaki S."/>
            <person name="Gariboldi M."/>
            <person name="Georgii-Hemming P."/>
            <person name="Gingeras T.R."/>
            <person name="Gojobori T."/>
            <person name="Green R.E."/>
            <person name="Gustincich S."/>
            <person name="Harbers M."/>
            <person name="Hayashi Y."/>
            <person name="Hensch T.K."/>
            <person name="Hirokawa N."/>
            <person name="Hill D."/>
            <person name="Huminiecki L."/>
            <person name="Iacono M."/>
            <person name="Ikeo K."/>
            <person name="Iwama A."/>
            <person name="Ishikawa T."/>
            <person name="Jakt M."/>
            <person name="Kanapin A."/>
            <person name="Katoh M."/>
            <person name="Kawasawa Y."/>
            <person name="Kelso J."/>
            <person name="Kitamura H."/>
            <person name="Kitano H."/>
            <person name="Kollias G."/>
            <person name="Krishnan S.P."/>
            <person name="Kruger A."/>
            <person name="Kummerfeld S.K."/>
            <person name="Kurochkin I.V."/>
            <person name="Lareau L.F."/>
            <person name="Lazarevic D."/>
            <person name="Lipovich L."/>
            <person name="Liu J."/>
            <person name="Liuni S."/>
            <person name="McWilliam S."/>
            <person name="Madan Babu M."/>
            <person name="Madera M."/>
            <person name="Marchionni L."/>
            <person name="Matsuda H."/>
            <person name="Matsuzawa S."/>
            <person name="Miki H."/>
            <person name="Mignone F."/>
            <person name="Miyake S."/>
            <person name="Morris K."/>
            <person name="Mottagui-Tabar S."/>
            <person name="Mulder N."/>
            <person name="Nakano N."/>
            <person name="Nakauchi H."/>
            <person name="Ng P."/>
            <person name="Nilsson R."/>
            <person name="Nishiguchi S."/>
            <person name="Nishikawa S."/>
            <person name="Nori F."/>
            <person name="Ohara O."/>
            <person name="Okazaki Y."/>
            <person name="Orlando V."/>
            <person name="Pang K.C."/>
            <person name="Pavan W.J."/>
            <person name="Pavesi G."/>
            <person name="Pesole G."/>
            <person name="Petrovsky N."/>
            <person name="Piazza S."/>
            <person name="Reed J."/>
            <person name="Reid J.F."/>
            <person name="Ring B.Z."/>
            <person name="Ringwald M."/>
            <person name="Rost B."/>
            <person name="Ruan Y."/>
            <person name="Salzberg S.L."/>
            <person name="Sandelin A."/>
            <person name="Schneider C."/>
            <person name="Schoenbach C."/>
            <person name="Sekiguchi K."/>
            <person name="Semple C.A."/>
            <person name="Seno S."/>
            <person name="Sessa L."/>
            <person name="Sheng Y."/>
            <person name="Shibata Y."/>
            <person name="Shimada H."/>
            <person name="Shimada K."/>
            <person name="Silva D."/>
            <person name="Sinclair B."/>
            <person name="Sperling S."/>
            <person name="Stupka E."/>
            <person name="Sugiura K."/>
            <person name="Sultana R."/>
            <person name="Takenaka Y."/>
            <person name="Taki K."/>
            <person name="Tammoja K."/>
            <person name="Tan S.L."/>
            <person name="Tang S."/>
            <person name="Taylor M.S."/>
            <person name="Tegner J."/>
            <person name="Teichmann S.A."/>
            <person name="Ueda H.R."/>
            <person name="van Nimwegen E."/>
            <person name="Verardo R."/>
            <person name="Wei C.L."/>
            <person name="Yagi K."/>
            <person name="Yamanishi H."/>
            <person name="Zabarovsky E."/>
            <person name="Zhu S."/>
            <person name="Zimmer A."/>
            <person name="Hide W."/>
            <person name="Bult C."/>
            <person name="Grimmond S.M."/>
            <person name="Teasdale R.D."/>
            <person name="Liu E.T."/>
            <person name="Brusic V."/>
            <person name="Quackenbush J."/>
            <person name="Wahlestedt C."/>
            <person name="Mattick J.S."/>
            <person name="Hume D.A."/>
            <person name="Kai C."/>
            <person name="Sasaki D."/>
            <person name="Tomaru Y."/>
            <person name="Fukuda S."/>
            <person name="Kanamori-Katayama M."/>
            <person name="Suzuki M."/>
            <person name="Aoki J."/>
            <person name="Arakawa T."/>
            <person name="Iida J."/>
            <person name="Imamura K."/>
            <person name="Itoh M."/>
            <person name="Kato T."/>
            <person name="Kawaji H."/>
            <person name="Kawagashira N."/>
            <person name="Kawashima T."/>
            <person name="Kojima M."/>
            <person name="Kondo S."/>
            <person name="Konno H."/>
            <person name="Nakano K."/>
            <person name="Ninomiya N."/>
            <person name="Nishio T."/>
            <person name="Okada M."/>
            <person name="Plessy C."/>
            <person name="Shibata K."/>
            <person name="Shiraki T."/>
            <person name="Suzuki S."/>
            <person name="Tagami M."/>
            <person name="Waki K."/>
            <person name="Watahiki A."/>
            <person name="Okamura-Oho Y."/>
            <person name="Suzuki H."/>
            <person name="Kawai J."/>
            <person name="Hayashizaki Y."/>
        </authorList>
    </citation>
    <scope>NUCLEOTIDE SEQUENCE [LARGE SCALE MRNA]</scope>
    <source>
        <strain>NOD</strain>
        <tissue>Bone marrow</tissue>
        <tissue>Thymus</tissue>
    </source>
</reference>
<reference key="4">
    <citation type="journal article" date="2004" name="Genome Res.">
        <title>The status, quality, and expansion of the NIH full-length cDNA project: the Mammalian Gene Collection (MGC).</title>
        <authorList>
            <consortium name="The MGC Project Team"/>
        </authorList>
    </citation>
    <scope>NUCLEOTIDE SEQUENCE [LARGE SCALE MRNA]</scope>
    <source>
        <strain>C57BL/6J</strain>
        <tissue>Mammary gland</tissue>
    </source>
</reference>
<reference key="5">
    <citation type="submission" date="1996-06" db="EMBL/GenBank/DDBJ databases">
        <authorList>
            <person name="Gaillard C."/>
            <person name="Perbal B."/>
        </authorList>
    </citation>
    <scope>NUCLEOTIDE SEQUENCE [GENOMIC DNA] OF 1-121</scope>
    <source>
        <strain>129/Sv</strain>
        <tissue>Liver</tissue>
    </source>
</reference>
<reference key="6">
    <citation type="journal article" date="2010" name="Cell">
        <title>A tissue-specific atlas of mouse protein phosphorylation and expression.</title>
        <authorList>
            <person name="Huttlin E.L."/>
            <person name="Jedrychowski M.P."/>
            <person name="Elias J.E."/>
            <person name="Goswami T."/>
            <person name="Rad R."/>
            <person name="Beausoleil S.A."/>
            <person name="Villen J."/>
            <person name="Haas W."/>
            <person name="Sowa M.E."/>
            <person name="Gygi S.P."/>
        </authorList>
    </citation>
    <scope>PHOSPHORYLATION [LARGE SCALE ANALYSIS] AT SER-26; SER-206; SER-208 AND SER-212</scope>
    <scope>IDENTIFICATION BY MASS SPECTROMETRY [LARGE SCALE ANALYSIS]</scope>
    <source>
        <tissue>Brain</tissue>
        <tissue>Kidney</tissue>
        <tissue>Lung</tissue>
        <tissue>Spleen</tissue>
        <tissue>Testis</tissue>
    </source>
</reference>
<reference key="7">
    <citation type="journal article" date="2012" name="Nucleic Acids Res.">
        <title>The testis-specific double bromodomain-containing protein BRDT forms a complex with multiple spliceosome components and is required for mRNA splicing and 3'-UTR truncation in round spermatids.</title>
        <authorList>
            <person name="Berkovits B.D."/>
            <person name="Wang L."/>
            <person name="Guarnieri P."/>
            <person name="Wolgemuth D.J."/>
        </authorList>
    </citation>
    <scope>INTERACTION WITH BRDT</scope>
</reference>
<gene>
    <name type="primary">Srsf2</name>
    <name type="synonym">Pr264</name>
    <name type="synonym">Sfrs10</name>
    <name type="synonym">Sfrs2</name>
</gene>
<protein>
    <recommendedName>
        <fullName>Serine/arginine-rich splicing factor 2</fullName>
    </recommendedName>
    <alternativeName>
        <fullName>Protein PR264</fullName>
    </alternativeName>
    <alternativeName>
        <fullName>Putative myelin regulatory factor 1</fullName>
        <shortName>MRF-1</shortName>
    </alternativeName>
    <alternativeName>
        <fullName>Splicing component, 35 kDa</fullName>
    </alternativeName>
    <alternativeName>
        <fullName>Splicing factor SC35</fullName>
        <shortName>SC-35</shortName>
    </alternativeName>
    <alternativeName>
        <fullName>Splicing factor, arginine/serine-rich 2</fullName>
    </alternativeName>
</protein>